<name>TRUD_WOLSU</name>
<keyword id="KW-0413">Isomerase</keyword>
<keyword id="KW-1185">Reference proteome</keyword>
<keyword id="KW-0819">tRNA processing</keyword>
<sequence length="361" mass="41776">MERLYYLNHAPIDFHFAQTPRDFVVEEIPLYPFSGAGEHLVLKIRKRNLSTFELVDILSSHLGIKSREIGYAGLKDKSALTLQHLSIPAKFGDKLEAFDHPEVKILEQVRHENKIRIGHLKGNRFFIRLKKLSPLNSLKIQGVLEEIKRWGIPNYFGYQRFGNDGNNHEIGRKIAHGEQRVTSPKRRTFLLSAYQSKLFNEWLKERIKLSKILAEFTPSEASRLAPMIPVEQLKALQKQPHPFKILPGEILHHYPHGKIFVAEDMEEESRRFVEKDIVPAGLLSGTKAKSSEGIAHLYEAPFIDEKIQEQGSRRLAWIFPEDLEYRYIEEEAHGELNFYLPKGSYATVLIEELAHREIKID</sequence>
<accession>P59893</accession>
<protein>
    <recommendedName>
        <fullName evidence="1">tRNA pseudouridine synthase D</fullName>
        <ecNumber evidence="1">5.4.99.27</ecNumber>
    </recommendedName>
    <alternativeName>
        <fullName evidence="1">tRNA pseudouridine(13) synthase</fullName>
    </alternativeName>
    <alternativeName>
        <fullName evidence="1">tRNA pseudouridylate synthase D</fullName>
    </alternativeName>
    <alternativeName>
        <fullName evidence="1">tRNA-uridine isomerase D</fullName>
    </alternativeName>
</protein>
<gene>
    <name evidence="1" type="primary">truD</name>
    <name type="ordered locus">WS1227</name>
</gene>
<proteinExistence type="inferred from homology"/>
<evidence type="ECO:0000255" key="1">
    <source>
        <dbReference type="HAMAP-Rule" id="MF_01082"/>
    </source>
</evidence>
<reference key="1">
    <citation type="journal article" date="2003" name="Proc. Natl. Acad. Sci. U.S.A.">
        <title>Complete genome sequence and analysis of Wolinella succinogenes.</title>
        <authorList>
            <person name="Baar C."/>
            <person name="Eppinger M."/>
            <person name="Raddatz G."/>
            <person name="Simon J."/>
            <person name="Lanz C."/>
            <person name="Klimmek O."/>
            <person name="Nandakumar R."/>
            <person name="Gross R."/>
            <person name="Rosinus A."/>
            <person name="Keller H."/>
            <person name="Jagtap P."/>
            <person name="Linke B."/>
            <person name="Meyer F."/>
            <person name="Lederer H."/>
            <person name="Schuster S.C."/>
        </authorList>
    </citation>
    <scope>NUCLEOTIDE SEQUENCE [LARGE SCALE GENOMIC DNA]</scope>
    <source>
        <strain>ATCC 29543 / DSM 1740 / CCUG 13145 / JCM 31913 / LMG 7466 / NCTC 11488 / FDC 602W</strain>
    </source>
</reference>
<feature type="chain" id="PRO_0000152530" description="tRNA pseudouridine synthase D">
    <location>
        <begin position="1"/>
        <end position="361"/>
    </location>
</feature>
<feature type="domain" description="TRUD" evidence="1">
    <location>
        <begin position="151"/>
        <end position="318"/>
    </location>
</feature>
<feature type="active site" description="Nucleophile" evidence="1">
    <location>
        <position position="76"/>
    </location>
</feature>
<organism>
    <name type="scientific">Wolinella succinogenes (strain ATCC 29543 / DSM 1740 / CCUG 13145 / JCM 31913 / LMG 7466 / NCTC 11488 / FDC 602W)</name>
    <name type="common">Vibrio succinogenes</name>
    <dbReference type="NCBI Taxonomy" id="273121"/>
    <lineage>
        <taxon>Bacteria</taxon>
        <taxon>Pseudomonadati</taxon>
        <taxon>Campylobacterota</taxon>
        <taxon>Epsilonproteobacteria</taxon>
        <taxon>Campylobacterales</taxon>
        <taxon>Helicobacteraceae</taxon>
        <taxon>Wolinella</taxon>
    </lineage>
</organism>
<dbReference type="EC" id="5.4.99.27" evidence="1"/>
<dbReference type="EMBL" id="BX571660">
    <property type="protein sequence ID" value="CAE10308.1"/>
    <property type="molecule type" value="Genomic_DNA"/>
</dbReference>
<dbReference type="RefSeq" id="WP_011139096.1">
    <property type="nucleotide sequence ID" value="NC_005090.1"/>
</dbReference>
<dbReference type="SMR" id="P59893"/>
<dbReference type="STRING" id="273121.WS1227"/>
<dbReference type="KEGG" id="wsu:WS1227"/>
<dbReference type="eggNOG" id="COG0585">
    <property type="taxonomic scope" value="Bacteria"/>
</dbReference>
<dbReference type="HOGENOM" id="CLU_005281_4_0_7"/>
<dbReference type="Proteomes" id="UP000000422">
    <property type="component" value="Chromosome"/>
</dbReference>
<dbReference type="GO" id="GO:0005829">
    <property type="term" value="C:cytosol"/>
    <property type="evidence" value="ECO:0007669"/>
    <property type="project" value="TreeGrafter"/>
</dbReference>
<dbReference type="GO" id="GO:0003723">
    <property type="term" value="F:RNA binding"/>
    <property type="evidence" value="ECO:0007669"/>
    <property type="project" value="InterPro"/>
</dbReference>
<dbReference type="GO" id="GO:0160150">
    <property type="term" value="F:tRNA pseudouridine(13) synthase activity"/>
    <property type="evidence" value="ECO:0007669"/>
    <property type="project" value="UniProtKB-EC"/>
</dbReference>
<dbReference type="GO" id="GO:0031119">
    <property type="term" value="P:tRNA pseudouridine synthesis"/>
    <property type="evidence" value="ECO:0007669"/>
    <property type="project" value="UniProtKB-UniRule"/>
</dbReference>
<dbReference type="CDD" id="cd02575">
    <property type="entry name" value="PseudoU_synth_EcTruD"/>
    <property type="match status" value="1"/>
</dbReference>
<dbReference type="Gene3D" id="3.30.2350.20">
    <property type="entry name" value="TruD, catalytic domain"/>
    <property type="match status" value="1"/>
</dbReference>
<dbReference type="HAMAP" id="MF_01082">
    <property type="entry name" value="TruD"/>
    <property type="match status" value="1"/>
</dbReference>
<dbReference type="InterPro" id="IPR020103">
    <property type="entry name" value="PsdUridine_synth_cat_dom_sf"/>
</dbReference>
<dbReference type="InterPro" id="IPR001656">
    <property type="entry name" value="PsdUridine_synth_TruD"/>
</dbReference>
<dbReference type="InterPro" id="IPR020119">
    <property type="entry name" value="PsdUridine_synth_TruD_CS"/>
</dbReference>
<dbReference type="InterPro" id="IPR011760">
    <property type="entry name" value="PsdUridine_synth_TruD_insert"/>
</dbReference>
<dbReference type="InterPro" id="IPR042214">
    <property type="entry name" value="TruD_catalytic"/>
</dbReference>
<dbReference type="InterPro" id="IPR050170">
    <property type="entry name" value="TruD_pseudoU_synthase"/>
</dbReference>
<dbReference type="NCBIfam" id="NF002154">
    <property type="entry name" value="PRK00984.1-3"/>
    <property type="match status" value="1"/>
</dbReference>
<dbReference type="NCBIfam" id="TIGR00094">
    <property type="entry name" value="tRNA_TruD_broad"/>
    <property type="match status" value="1"/>
</dbReference>
<dbReference type="PANTHER" id="PTHR47811">
    <property type="entry name" value="TRNA PSEUDOURIDINE SYNTHASE D"/>
    <property type="match status" value="1"/>
</dbReference>
<dbReference type="PANTHER" id="PTHR47811:SF1">
    <property type="entry name" value="TRNA PSEUDOURIDINE SYNTHASE D"/>
    <property type="match status" value="1"/>
</dbReference>
<dbReference type="Pfam" id="PF01142">
    <property type="entry name" value="TruD"/>
    <property type="match status" value="2"/>
</dbReference>
<dbReference type="SUPFAM" id="SSF55120">
    <property type="entry name" value="Pseudouridine synthase"/>
    <property type="match status" value="1"/>
</dbReference>
<dbReference type="PROSITE" id="PS50984">
    <property type="entry name" value="TRUD"/>
    <property type="match status" value="1"/>
</dbReference>
<dbReference type="PROSITE" id="PS01268">
    <property type="entry name" value="UPF0024"/>
    <property type="match status" value="1"/>
</dbReference>
<comment type="function">
    <text evidence="1">Responsible for synthesis of pseudouridine from uracil-13 in transfer RNAs.</text>
</comment>
<comment type="catalytic activity">
    <reaction evidence="1">
        <text>uridine(13) in tRNA = pseudouridine(13) in tRNA</text>
        <dbReference type="Rhea" id="RHEA:42540"/>
        <dbReference type="Rhea" id="RHEA-COMP:10105"/>
        <dbReference type="Rhea" id="RHEA-COMP:10106"/>
        <dbReference type="ChEBI" id="CHEBI:65314"/>
        <dbReference type="ChEBI" id="CHEBI:65315"/>
        <dbReference type="EC" id="5.4.99.27"/>
    </reaction>
</comment>
<comment type="similarity">
    <text evidence="1">Belongs to the pseudouridine synthase TruD family.</text>
</comment>